<reference key="1">
    <citation type="journal article" date="2009" name="Vaccine">
        <title>Whole genome sequence analysis of Mycobacterium bovis bacillus Calmette-Guerin (BCG) Tokyo 172: a comparative study of BCG vaccine substrains.</title>
        <authorList>
            <person name="Seki M."/>
            <person name="Honda I."/>
            <person name="Fujita I."/>
            <person name="Yano I."/>
            <person name="Yamamoto S."/>
            <person name="Koyama A."/>
        </authorList>
    </citation>
    <scope>NUCLEOTIDE SEQUENCE [LARGE SCALE GENOMIC DNA]</scope>
    <source>
        <strain>BCG / Tokyo 172 / ATCC 35737 / TMC 1019</strain>
    </source>
</reference>
<sequence length="156" mass="17600">MPRKGPAPKRPLVNDPVYGSQLVTQLVNKVLLKGKKSLAERIVYGALEQARDKTGTDPVITLKRALDNVKPALEVRSRRVGGATYQVPVEVRPDRSTTLALRWLVGYSRQRREKTMIERLANEILDASNGLGASVKRREDTHKMAEANRAFAHYRW</sequence>
<feature type="chain" id="PRO_1000135613" description="Small ribosomal subunit protein uS7">
    <location>
        <begin position="1"/>
        <end position="156"/>
    </location>
</feature>
<organism>
    <name type="scientific">Mycobacterium bovis (strain BCG / Tokyo 172 / ATCC 35737 / TMC 1019)</name>
    <dbReference type="NCBI Taxonomy" id="561275"/>
    <lineage>
        <taxon>Bacteria</taxon>
        <taxon>Bacillati</taxon>
        <taxon>Actinomycetota</taxon>
        <taxon>Actinomycetes</taxon>
        <taxon>Mycobacteriales</taxon>
        <taxon>Mycobacteriaceae</taxon>
        <taxon>Mycobacterium</taxon>
        <taxon>Mycobacterium tuberculosis complex</taxon>
    </lineage>
</organism>
<evidence type="ECO:0000255" key="1">
    <source>
        <dbReference type="HAMAP-Rule" id="MF_00480"/>
    </source>
</evidence>
<evidence type="ECO:0000305" key="2"/>
<comment type="function">
    <text evidence="1">One of the primary rRNA binding proteins, it binds directly to 16S rRNA where it nucleates assembly of the head domain of the 30S subunit. Is located at the subunit interface close to the decoding center, probably blocks exit of the E-site tRNA.</text>
</comment>
<comment type="subunit">
    <text evidence="1">Part of the 30S ribosomal subunit. Contacts proteins S9 and S11.</text>
</comment>
<comment type="similarity">
    <text evidence="1">Belongs to the universal ribosomal protein uS7 family.</text>
</comment>
<proteinExistence type="inferred from homology"/>
<dbReference type="EMBL" id="AP010918">
    <property type="protein sequence ID" value="BAH24995.1"/>
    <property type="molecule type" value="Genomic_DNA"/>
</dbReference>
<dbReference type="RefSeq" id="WP_003403456.1">
    <property type="nucleotide sequence ID" value="NZ_CP014566.1"/>
</dbReference>
<dbReference type="SMR" id="C1AL16"/>
<dbReference type="GeneID" id="45424645"/>
<dbReference type="KEGG" id="mbt:JTY_0702"/>
<dbReference type="HOGENOM" id="CLU_072226_1_1_11"/>
<dbReference type="GO" id="GO:0015935">
    <property type="term" value="C:small ribosomal subunit"/>
    <property type="evidence" value="ECO:0007669"/>
    <property type="project" value="InterPro"/>
</dbReference>
<dbReference type="GO" id="GO:0019843">
    <property type="term" value="F:rRNA binding"/>
    <property type="evidence" value="ECO:0007669"/>
    <property type="project" value="UniProtKB-UniRule"/>
</dbReference>
<dbReference type="GO" id="GO:0003735">
    <property type="term" value="F:structural constituent of ribosome"/>
    <property type="evidence" value="ECO:0007669"/>
    <property type="project" value="InterPro"/>
</dbReference>
<dbReference type="GO" id="GO:0000049">
    <property type="term" value="F:tRNA binding"/>
    <property type="evidence" value="ECO:0007669"/>
    <property type="project" value="UniProtKB-UniRule"/>
</dbReference>
<dbReference type="GO" id="GO:0006412">
    <property type="term" value="P:translation"/>
    <property type="evidence" value="ECO:0007669"/>
    <property type="project" value="UniProtKB-UniRule"/>
</dbReference>
<dbReference type="CDD" id="cd14869">
    <property type="entry name" value="uS7_Bacteria"/>
    <property type="match status" value="1"/>
</dbReference>
<dbReference type="FunFam" id="1.10.455.10:FF:000001">
    <property type="entry name" value="30S ribosomal protein S7"/>
    <property type="match status" value="1"/>
</dbReference>
<dbReference type="Gene3D" id="1.10.455.10">
    <property type="entry name" value="Ribosomal protein S7 domain"/>
    <property type="match status" value="1"/>
</dbReference>
<dbReference type="HAMAP" id="MF_00480_B">
    <property type="entry name" value="Ribosomal_uS7_B"/>
    <property type="match status" value="1"/>
</dbReference>
<dbReference type="InterPro" id="IPR000235">
    <property type="entry name" value="Ribosomal_uS7"/>
</dbReference>
<dbReference type="InterPro" id="IPR005717">
    <property type="entry name" value="Ribosomal_uS7_bac/org-type"/>
</dbReference>
<dbReference type="InterPro" id="IPR020606">
    <property type="entry name" value="Ribosomal_uS7_CS"/>
</dbReference>
<dbReference type="InterPro" id="IPR023798">
    <property type="entry name" value="Ribosomal_uS7_dom"/>
</dbReference>
<dbReference type="InterPro" id="IPR036823">
    <property type="entry name" value="Ribosomal_uS7_dom_sf"/>
</dbReference>
<dbReference type="NCBIfam" id="TIGR01029">
    <property type="entry name" value="rpsG_bact"/>
    <property type="match status" value="1"/>
</dbReference>
<dbReference type="PANTHER" id="PTHR11205">
    <property type="entry name" value="RIBOSOMAL PROTEIN S7"/>
    <property type="match status" value="1"/>
</dbReference>
<dbReference type="Pfam" id="PF00177">
    <property type="entry name" value="Ribosomal_S7"/>
    <property type="match status" value="1"/>
</dbReference>
<dbReference type="PIRSF" id="PIRSF002122">
    <property type="entry name" value="RPS7p_RPS7a_RPS5e_RPS7o"/>
    <property type="match status" value="1"/>
</dbReference>
<dbReference type="SUPFAM" id="SSF47973">
    <property type="entry name" value="Ribosomal protein S7"/>
    <property type="match status" value="1"/>
</dbReference>
<dbReference type="PROSITE" id="PS00052">
    <property type="entry name" value="RIBOSOMAL_S7"/>
    <property type="match status" value="1"/>
</dbReference>
<name>RS7_MYCBT</name>
<gene>
    <name evidence="1" type="primary">rpsG</name>
    <name type="ordered locus">JTY_0702</name>
</gene>
<keyword id="KW-0687">Ribonucleoprotein</keyword>
<keyword id="KW-0689">Ribosomal protein</keyword>
<keyword id="KW-0694">RNA-binding</keyword>
<keyword id="KW-0699">rRNA-binding</keyword>
<keyword id="KW-0820">tRNA-binding</keyword>
<protein>
    <recommendedName>
        <fullName evidence="1">Small ribosomal subunit protein uS7</fullName>
    </recommendedName>
    <alternativeName>
        <fullName evidence="2">30S ribosomal protein S7</fullName>
    </alternativeName>
</protein>
<accession>C1AL16</accession>